<sequence>MYTHYLKNLISFESVTPNSAGAVEYIDGLLKQHGFKTEIKIFGDSKNERVTNLYGVFGSNEPNICFVGHVDVVPAGNHEFWHNSNPFKFHEQDGKIYGRGAVDMKGAIACFLAASLNFIKNNMDFKGSISFLITSDEEGKSTHGTKEMLQYIYDQRYKIDFAVVGEPTCEKEIGDTIKIGRRGSVNFKLNIVGLAGHVAYPHKANNPLPCLIKILNELTNIRLDEGTEFFQNSNLEVTNIDVGNDILNTIPASAEACFNIRFNSLHSVETLSQLIEQIIKQYCKEYKVDYKLEYSSSAESFVQNPNDNDKIKEFADVIERTLKIKSEFSTSGGTSDARFVKDYCSLVEFGLLSEMAHKINEYTKISDLQKLYDVYYNFLMEIF</sequence>
<gene>
    <name evidence="1" type="primary">dapE</name>
    <name type="ordered locus">RT0865</name>
</gene>
<protein>
    <recommendedName>
        <fullName evidence="1">Succinyl-diaminopimelate desuccinylase</fullName>
        <shortName evidence="1">SDAP desuccinylase</shortName>
        <ecNumber evidence="1">3.5.1.18</ecNumber>
    </recommendedName>
    <alternativeName>
        <fullName evidence="1">N-succinyl-LL-2,6-diaminoheptanedioate amidohydrolase</fullName>
    </alternativeName>
</protein>
<organism>
    <name type="scientific">Rickettsia typhi (strain ATCC VR-144 / Wilmington)</name>
    <dbReference type="NCBI Taxonomy" id="257363"/>
    <lineage>
        <taxon>Bacteria</taxon>
        <taxon>Pseudomonadati</taxon>
        <taxon>Pseudomonadota</taxon>
        <taxon>Alphaproteobacteria</taxon>
        <taxon>Rickettsiales</taxon>
        <taxon>Rickettsiaceae</taxon>
        <taxon>Rickettsieae</taxon>
        <taxon>Rickettsia</taxon>
        <taxon>typhus group</taxon>
    </lineage>
</organism>
<feature type="chain" id="PRO_0000375707" description="Succinyl-diaminopimelate desuccinylase">
    <location>
        <begin position="1"/>
        <end position="383"/>
    </location>
</feature>
<feature type="active site" evidence="1">
    <location>
        <position position="71"/>
    </location>
</feature>
<feature type="active site" description="Proton acceptor" evidence="1">
    <location>
        <position position="137"/>
    </location>
</feature>
<feature type="binding site" evidence="1">
    <location>
        <position position="69"/>
    </location>
    <ligand>
        <name>Zn(2+)</name>
        <dbReference type="ChEBI" id="CHEBI:29105"/>
        <label>1</label>
    </ligand>
</feature>
<feature type="binding site" evidence="1">
    <location>
        <position position="103"/>
    </location>
    <ligand>
        <name>Zn(2+)</name>
        <dbReference type="ChEBI" id="CHEBI:29105"/>
        <label>1</label>
    </ligand>
</feature>
<feature type="binding site" evidence="1">
    <location>
        <position position="103"/>
    </location>
    <ligand>
        <name>Zn(2+)</name>
        <dbReference type="ChEBI" id="CHEBI:29105"/>
        <label>2</label>
    </ligand>
</feature>
<feature type="binding site" evidence="1">
    <location>
        <position position="138"/>
    </location>
    <ligand>
        <name>Zn(2+)</name>
        <dbReference type="ChEBI" id="CHEBI:29105"/>
        <label>2</label>
    </ligand>
</feature>
<feature type="binding site" evidence="1">
    <location>
        <position position="166"/>
    </location>
    <ligand>
        <name>Zn(2+)</name>
        <dbReference type="ChEBI" id="CHEBI:29105"/>
        <label>1</label>
    </ligand>
</feature>
<feature type="binding site" evidence="1">
    <location>
        <position position="357"/>
    </location>
    <ligand>
        <name>Zn(2+)</name>
        <dbReference type="ChEBI" id="CHEBI:29105"/>
        <label>2</label>
    </ligand>
</feature>
<comment type="function">
    <text evidence="1">Catalyzes the hydrolysis of N-succinyl-L,L-diaminopimelic acid (SDAP), forming succinate and LL-2,6-diaminopimelate (DAP), an intermediate involved in the bacterial biosynthesis of lysine and meso-diaminopimelic acid, an essential component of bacterial cell walls.</text>
</comment>
<comment type="catalytic activity">
    <reaction evidence="1">
        <text>N-succinyl-(2S,6S)-2,6-diaminopimelate + H2O = (2S,6S)-2,6-diaminopimelate + succinate</text>
        <dbReference type="Rhea" id="RHEA:22608"/>
        <dbReference type="ChEBI" id="CHEBI:15377"/>
        <dbReference type="ChEBI" id="CHEBI:30031"/>
        <dbReference type="ChEBI" id="CHEBI:57609"/>
        <dbReference type="ChEBI" id="CHEBI:58087"/>
        <dbReference type="EC" id="3.5.1.18"/>
    </reaction>
</comment>
<comment type="cofactor">
    <cofactor evidence="1">
        <name>Zn(2+)</name>
        <dbReference type="ChEBI" id="CHEBI:29105"/>
    </cofactor>
    <cofactor evidence="1">
        <name>Co(2+)</name>
        <dbReference type="ChEBI" id="CHEBI:48828"/>
    </cofactor>
    <text evidence="1">Binds 2 Zn(2+) or Co(2+) ions per subunit.</text>
</comment>
<comment type="pathway">
    <text evidence="1">Amino-acid biosynthesis; L-lysine biosynthesis via DAP pathway; LL-2,6-diaminopimelate from (S)-tetrahydrodipicolinate (succinylase route): step 3/3.</text>
</comment>
<comment type="subunit">
    <text evidence="1">Homodimer.</text>
</comment>
<comment type="similarity">
    <text evidence="1">Belongs to the peptidase M20A family. DapE subfamily.</text>
</comment>
<reference key="1">
    <citation type="journal article" date="2004" name="J. Bacteriol.">
        <title>Complete genome sequence of Rickettsia typhi and comparison with sequences of other Rickettsiae.</title>
        <authorList>
            <person name="McLeod M.P."/>
            <person name="Qin X."/>
            <person name="Karpathy S.E."/>
            <person name="Gioia J."/>
            <person name="Highlander S.K."/>
            <person name="Fox G.E."/>
            <person name="McNeill T.Z."/>
            <person name="Jiang H."/>
            <person name="Muzny D."/>
            <person name="Jacob L.S."/>
            <person name="Hawes A.C."/>
            <person name="Sodergren E."/>
            <person name="Gill R."/>
            <person name="Hume J."/>
            <person name="Morgan M."/>
            <person name="Fan G."/>
            <person name="Amin A.G."/>
            <person name="Gibbs R.A."/>
            <person name="Hong C."/>
            <person name="Yu X.-J."/>
            <person name="Walker D.H."/>
            <person name="Weinstock G.M."/>
        </authorList>
    </citation>
    <scope>NUCLEOTIDE SEQUENCE [LARGE SCALE GENOMIC DNA]</scope>
    <source>
        <strain>ATCC VR-144 / Wilmington</strain>
    </source>
</reference>
<accession>Q68VN9</accession>
<name>DAPE_RICTY</name>
<evidence type="ECO:0000255" key="1">
    <source>
        <dbReference type="HAMAP-Rule" id="MF_01690"/>
    </source>
</evidence>
<dbReference type="EC" id="3.5.1.18" evidence="1"/>
<dbReference type="EMBL" id="AE017197">
    <property type="protein sequence ID" value="AAU04317.1"/>
    <property type="molecule type" value="Genomic_DNA"/>
</dbReference>
<dbReference type="RefSeq" id="WP_011191291.1">
    <property type="nucleotide sequence ID" value="NC_006142.1"/>
</dbReference>
<dbReference type="SMR" id="Q68VN9"/>
<dbReference type="KEGG" id="rty:RT0865"/>
<dbReference type="eggNOG" id="COG0624">
    <property type="taxonomic scope" value="Bacteria"/>
</dbReference>
<dbReference type="HOGENOM" id="CLU_021802_4_0_5"/>
<dbReference type="OrthoDB" id="9809784at2"/>
<dbReference type="UniPathway" id="UPA00034">
    <property type="reaction ID" value="UER00021"/>
</dbReference>
<dbReference type="Proteomes" id="UP000000604">
    <property type="component" value="Chromosome"/>
</dbReference>
<dbReference type="GO" id="GO:0008777">
    <property type="term" value="F:acetylornithine deacetylase activity"/>
    <property type="evidence" value="ECO:0007669"/>
    <property type="project" value="TreeGrafter"/>
</dbReference>
<dbReference type="GO" id="GO:0050897">
    <property type="term" value="F:cobalt ion binding"/>
    <property type="evidence" value="ECO:0007669"/>
    <property type="project" value="UniProtKB-UniRule"/>
</dbReference>
<dbReference type="GO" id="GO:0009014">
    <property type="term" value="F:succinyl-diaminopimelate desuccinylase activity"/>
    <property type="evidence" value="ECO:0007669"/>
    <property type="project" value="UniProtKB-UniRule"/>
</dbReference>
<dbReference type="GO" id="GO:0008270">
    <property type="term" value="F:zinc ion binding"/>
    <property type="evidence" value="ECO:0007669"/>
    <property type="project" value="UniProtKB-UniRule"/>
</dbReference>
<dbReference type="GO" id="GO:0019877">
    <property type="term" value="P:diaminopimelate biosynthetic process"/>
    <property type="evidence" value="ECO:0007669"/>
    <property type="project" value="UniProtKB-UniRule"/>
</dbReference>
<dbReference type="GO" id="GO:0006526">
    <property type="term" value="P:L-arginine biosynthetic process"/>
    <property type="evidence" value="ECO:0007669"/>
    <property type="project" value="TreeGrafter"/>
</dbReference>
<dbReference type="GO" id="GO:0009089">
    <property type="term" value="P:lysine biosynthetic process via diaminopimelate"/>
    <property type="evidence" value="ECO:0007669"/>
    <property type="project" value="UniProtKB-UniRule"/>
</dbReference>
<dbReference type="CDD" id="cd03891">
    <property type="entry name" value="M20_DapE_proteobac"/>
    <property type="match status" value="1"/>
</dbReference>
<dbReference type="Gene3D" id="3.30.70.360">
    <property type="match status" value="1"/>
</dbReference>
<dbReference type="Gene3D" id="3.40.630.10">
    <property type="entry name" value="Zn peptidases"/>
    <property type="match status" value="2"/>
</dbReference>
<dbReference type="HAMAP" id="MF_01690">
    <property type="entry name" value="DapE"/>
    <property type="match status" value="1"/>
</dbReference>
<dbReference type="InterPro" id="IPR001261">
    <property type="entry name" value="ArgE/DapE_CS"/>
</dbReference>
<dbReference type="InterPro" id="IPR036264">
    <property type="entry name" value="Bact_exopeptidase_dim_dom"/>
</dbReference>
<dbReference type="InterPro" id="IPR005941">
    <property type="entry name" value="DapE_proteobac"/>
</dbReference>
<dbReference type="InterPro" id="IPR002933">
    <property type="entry name" value="Peptidase_M20"/>
</dbReference>
<dbReference type="InterPro" id="IPR011650">
    <property type="entry name" value="Peptidase_M20_dimer"/>
</dbReference>
<dbReference type="InterPro" id="IPR050072">
    <property type="entry name" value="Peptidase_M20A"/>
</dbReference>
<dbReference type="NCBIfam" id="TIGR01246">
    <property type="entry name" value="dapE_proteo"/>
    <property type="match status" value="1"/>
</dbReference>
<dbReference type="NCBIfam" id="NF009557">
    <property type="entry name" value="PRK13009.1"/>
    <property type="match status" value="1"/>
</dbReference>
<dbReference type="PANTHER" id="PTHR43808">
    <property type="entry name" value="ACETYLORNITHINE DEACETYLASE"/>
    <property type="match status" value="1"/>
</dbReference>
<dbReference type="PANTHER" id="PTHR43808:SF31">
    <property type="entry name" value="N-ACETYL-L-CITRULLINE DEACETYLASE"/>
    <property type="match status" value="1"/>
</dbReference>
<dbReference type="Pfam" id="PF07687">
    <property type="entry name" value="M20_dimer"/>
    <property type="match status" value="1"/>
</dbReference>
<dbReference type="Pfam" id="PF01546">
    <property type="entry name" value="Peptidase_M20"/>
    <property type="match status" value="1"/>
</dbReference>
<dbReference type="SUPFAM" id="SSF55031">
    <property type="entry name" value="Bacterial exopeptidase dimerisation domain"/>
    <property type="match status" value="1"/>
</dbReference>
<dbReference type="SUPFAM" id="SSF53187">
    <property type="entry name" value="Zn-dependent exopeptidases"/>
    <property type="match status" value="1"/>
</dbReference>
<dbReference type="PROSITE" id="PS00759">
    <property type="entry name" value="ARGE_DAPE_CPG2_2"/>
    <property type="match status" value="1"/>
</dbReference>
<keyword id="KW-0028">Amino-acid biosynthesis</keyword>
<keyword id="KW-0170">Cobalt</keyword>
<keyword id="KW-0220">Diaminopimelate biosynthesis</keyword>
<keyword id="KW-0378">Hydrolase</keyword>
<keyword id="KW-0457">Lysine biosynthesis</keyword>
<keyword id="KW-0479">Metal-binding</keyword>
<keyword id="KW-0862">Zinc</keyword>
<proteinExistence type="inferred from homology"/>